<feature type="chain" id="PRO_0000222168" description="RNA-directed RNA polymerase L">
    <location>
        <begin position="1"/>
        <end position="2210"/>
    </location>
</feature>
<feature type="domain" description="RdRp catalytic" evidence="4">
    <location>
        <begin position="626"/>
        <end position="810"/>
    </location>
</feature>
<feature type="domain" description="Mononegavirus-type SAM-dependent 2'-O-MTase" evidence="5">
    <location>
        <begin position="1802"/>
        <end position="2000"/>
    </location>
</feature>
<feature type="region of interest" description="Disordered" evidence="6">
    <location>
        <begin position="1693"/>
        <end position="1740"/>
    </location>
</feature>
<feature type="compositionally biased region" description="Polar residues" evidence="6">
    <location>
        <begin position="1705"/>
        <end position="1721"/>
    </location>
</feature>
<reference key="1">
    <citation type="submission" date="1995-03" db="EMBL/GenBank/DDBJ databases">
        <authorList>
            <person name="Sanchez A."/>
            <person name="Trappier S."/>
            <person name="Nichol S.T."/>
        </authorList>
    </citation>
    <scope>NUCLEOTIDE SEQUENCE [GENOMIC RNA]</scope>
</reference>
<name>L_EBOSM</name>
<gene>
    <name type="primary">L</name>
</gene>
<accession>Q66802</accession>
<organism>
    <name type="scientific">Sudan ebolavirus (strain Maleo-79)</name>
    <name type="common">SEBOV</name>
    <name type="synonym">Sudan Ebola virus</name>
    <dbReference type="NCBI Taxonomy" id="128949"/>
    <lineage>
        <taxon>Viruses</taxon>
        <taxon>Riboviria</taxon>
        <taxon>Orthornavirae</taxon>
        <taxon>Negarnaviricota</taxon>
        <taxon>Haploviricotina</taxon>
        <taxon>Monjiviricetes</taxon>
        <taxon>Mononegavirales</taxon>
        <taxon>Filoviridae</taxon>
        <taxon>Orthoebolavirus</taxon>
        <taxon>Orthoebolavirus sudanense</taxon>
        <taxon>Sudan ebolavirus</taxon>
    </lineage>
</organism>
<evidence type="ECO:0000250" key="1"/>
<evidence type="ECO:0000250" key="2">
    <source>
        <dbReference type="UniProtKB" id="P03523"/>
    </source>
</evidence>
<evidence type="ECO:0000250" key="3">
    <source>
        <dbReference type="UniProtKB" id="P28887"/>
    </source>
</evidence>
<evidence type="ECO:0000255" key="4">
    <source>
        <dbReference type="PROSITE-ProRule" id="PRU00539"/>
    </source>
</evidence>
<evidence type="ECO:0000255" key="5">
    <source>
        <dbReference type="PROSITE-ProRule" id="PRU00923"/>
    </source>
</evidence>
<evidence type="ECO:0000256" key="6">
    <source>
        <dbReference type="SAM" id="MobiDB-lite"/>
    </source>
</evidence>
<evidence type="ECO:0000305" key="7"/>
<organismHost>
    <name type="scientific">Epomops franqueti</name>
    <name type="common">Franquet's epauletted fruit bat</name>
    <name type="synonym">Epomophorus franqueti</name>
    <dbReference type="NCBI Taxonomy" id="77231"/>
</organismHost>
<organismHost>
    <name type="scientific">Homo sapiens</name>
    <name type="common">Human</name>
    <dbReference type="NCBI Taxonomy" id="9606"/>
</organismHost>
<organismHost>
    <name type="scientific">Myonycteris torquata</name>
    <name type="common">Little collared fruit bat</name>
    <dbReference type="NCBI Taxonomy" id="77243"/>
</organismHost>
<protein>
    <recommendedName>
        <fullName>RNA-directed RNA polymerase L</fullName>
        <shortName>Protein L</shortName>
    </recommendedName>
    <alternativeName>
        <fullName>Large structural protein</fullName>
    </alternativeName>
    <alternativeName>
        <fullName>Replicase</fullName>
    </alternativeName>
    <alternativeName>
        <fullName>Transcriptase</fullName>
    </alternativeName>
    <domain>
        <recommendedName>
            <fullName>RNA-directed RNA polymerase</fullName>
            <ecNumber evidence="3">2.7.7.48</ecNumber>
        </recommendedName>
    </domain>
    <domain>
        <recommendedName>
            <fullName evidence="2">GTP phosphohydrolase</fullName>
            <ecNumber evidence="2">3.6.1.-</ecNumber>
        </recommendedName>
    </domain>
    <domain>
        <recommendedName>
            <fullName evidence="7">GDP polyribonucleotidyltransferase</fullName>
            <ecNumber evidence="2">2.7.7.88</ecNumber>
        </recommendedName>
        <alternativeName>
            <fullName evidence="7">PRNTase</fullName>
        </alternativeName>
    </domain>
    <domain>
        <recommendedName>
            <fullName evidence="7">mRNA cap methyltransferase</fullName>
            <ecNumber evidence="2">2.1.1.375</ecNumber>
        </recommendedName>
        <alternativeName>
            <fullName evidence="2">mRNA (guanine-N(7)-)-methyltransferase</fullName>
            <shortName evidence="2">G-N7-MTase</shortName>
        </alternativeName>
        <alternativeName>
            <fullName evidence="2">mRNA (nucleoside-2'-O-)-methyltransferase</fullName>
            <shortName evidence="2">N1-2'-O-MTase</shortName>
        </alternativeName>
    </domain>
</protein>
<keyword id="KW-0067">ATP-binding</keyword>
<keyword id="KW-1035">Host cytoplasm</keyword>
<keyword id="KW-0378">Hydrolase</keyword>
<keyword id="KW-0489">Methyltransferase</keyword>
<keyword id="KW-0506">mRNA capping</keyword>
<keyword id="KW-0507">mRNA processing</keyword>
<keyword id="KW-0511">Multifunctional enzyme</keyword>
<keyword id="KW-0547">Nucleotide-binding</keyword>
<keyword id="KW-0548">Nucleotidyltransferase</keyword>
<keyword id="KW-0696">RNA-directed RNA polymerase</keyword>
<keyword id="KW-0949">S-adenosyl-L-methionine</keyword>
<keyword id="KW-0808">Transferase</keyword>
<keyword id="KW-0693">Viral RNA replication</keyword>
<keyword id="KW-0946">Virion</keyword>
<proteinExistence type="inferred from homology"/>
<sequence>MMATQHTQYPDARLSSPIVLDQCDLVTRACGLYSEYSLNPKLRTCRLPKHIYRLKYDAIVLRFISDVPVATIPIDYIAPMLINVLADSKNAPLEPPCLSFLDEIVNYTVQDAAFLNYYMNQIKTQEGVITDQLKQNIRRVIHKNRYLSALFFWHDLSILTRRGRMNRGNVRSTWFVTNEVVDILGYGDYIFWKIPIALLPMNSANVPHASTDWYQPNIFKEAIQGHTHIISVSTAEVLIMCKDLVTSRFNTLLIAELARLEDPVSADYPLVDDIQSLYNAGDYLLSILGSEGYQIIKYLEPLCLAKIQLCSQYTERKGRFLTQMHLAVIQTLRELLLNRGLKKSQLSKIREFHQLLLRLRSTPQQLCELFSIQKHWGHPVLHSEKAIQKVKNHATVLKALRPIIIFETYCVFKYSVAKHFFDSQGTWYSVISDRCLTPGLNSYIRRNQFPPLPMIKDLLWEFYHLDHPPLFSTKIISDLSIFIKDRATAVEQTCWDAVFEPNVLGYSPPYRFNTKRVPEQFLEQEDFSIESVLQYAQELRYLLPQNRNFSFSLKEKELNVGRTFGKLPYLTRNVQTLCEALLADGLAKAFPSNMMVVTEREQKESLLHQASWHHTSDDFGEHATVRGSSFVTDLEKYNLAFRYEFTAPFIKYCNQCYGVRNVFDWMHFLIPQCYMHVSDYYNPPHNVTLENREYPPEGPSAYRGHLGGIEGLQQKLWTSISCAQISLVEIKTGFKLRSAVMGDNQCITVLSVFPLESSPNEQERCAEDNAARVAASLAKVTSACGIFLKPDETFVHSGFIYFGPKQYLNGIQLPQSLKTAARMAPLSDAIFDDLQGTLASIGTAFERSISETRHILPSRVAAAFHTYFSVRILQHHHLGFHKGSDLGQLAINKPLDFGTIALSLAVPQVLGGLSFLNPEKCLYRNLGDPVTSGLFQLKHYLSMVGMSDIFHALVAKSPGNCSAIDFVLNPGGLNVPGSQDLTSFLRQIVRRSITLSARNKLINTLFHASADLEDELVCKWLLSSTPVMSRFAADIFSRTPSGKRLQILGYLEGTRTLLASKMISNNAETPILERLRKITLQRWNLWFSYLDHCDSALMEAIQPIRCTVDIAQILREYSWAHILGGRQLIGATLPCIPEQFQTTWLKPYEQCVECSSTNNSSPYVSVALKRNVVSAWPDASRLGWTIGDGIPYIGSRTEDKIGQPAIKPRCPSAALREAIELTSRLTWVTQGSANSDQLIRPFLEARVNLSVQEILQMTPSHYSGNIVHRYNDQYSPHSFMANRMSNTATRLMVSTNTLGEFSGGGQAARDSNIIFQNVINFAVALYDIRFRNTCTSSIQYHRAHIHLTDCCTREVPAQYLTYTTTLNLDLSKYRNNELIYDSEPLRGGLNCNLSIDSPLMKGPRLNIIEDDLIRLPHLSGWELAKTVLQSIISDSSNSSTDPISSGETRSFTTHFLTYPKIGLLYSFGALISFYLGNTILCTKKIGLTEFLYYLQNQIHNLSHRSLRIFKPTFRHSSVMSRLMDIDPNFSIYIGGTAGDRGLSDAARLFLRIAISTFLSFVEEWVIFRKANIPLWVVYPLEGQRPDPPGEFLNRVKSLIVGIEDDKNKGSILSRSEEKCSSNLVYNCKSTASNFFHASLAYWRGRHRPKKTIGATKATTAPHIILPLGNSDRPPGLDLNQSNDTFIPTRIKQIVQGDSRNDRTTTTRLPPQSRSTPTSATEPPTKIYEGSTTYRGKSTDTHLDEGHNAKEFPFNPHRLVVPFFKLTKDGEYSIEPSPEESRSNIKGLLQHLRTMVDTTIYCRFTGIVSSMHYKLDEVLWEYNKFESAVTLAEGEGSGALLLIQKYGVKKLFLNTLATEHSIESEVISGYTTPRMLLSVMPRTHRGELEVILNNSASQITDITHRDWFSNQKNRIPNDVDIITMDAETTENLDRSRLYEAVYTIICNHINPKTLKVVILKVFLSDLDGMCWINNYLAPMFGSGYLIKPITSSARSSEWYLCLSNLLSTLRTTQHQTQANCLHVVQCALQQQVQRGSYWLSHLTKYTTSRLHNSYIAFGFPSLEKVLYHRYNLVDSRNGPLVSITRHLALLQTEIRELVTDYNQLRQSRTQTYHFIKTSKGRITKLVNDYLRFELVIRALKNNSTWHHELYLLPELIGVCHRFNHTRNCTCSERFLVQTLYLHRMSDAEIKLMDRLTSLVNMFPEGFRSSSV</sequence>
<dbReference type="EC" id="2.7.7.48" evidence="3"/>
<dbReference type="EC" id="3.6.1.-" evidence="2"/>
<dbReference type="EC" id="2.7.7.88" evidence="2"/>
<dbReference type="EC" id="2.1.1.375" evidence="2"/>
<dbReference type="EMBL" id="U23458">
    <property type="protein sequence ID" value="AAA79970.1"/>
    <property type="molecule type" value="Genomic_RNA"/>
</dbReference>
<dbReference type="SMR" id="Q66802"/>
<dbReference type="GO" id="GO:0030430">
    <property type="term" value="C:host cell cytoplasm"/>
    <property type="evidence" value="ECO:0007669"/>
    <property type="project" value="UniProtKB-SubCell"/>
</dbReference>
<dbReference type="GO" id="GO:0044423">
    <property type="term" value="C:virion component"/>
    <property type="evidence" value="ECO:0007669"/>
    <property type="project" value="UniProtKB-KW"/>
</dbReference>
<dbReference type="GO" id="GO:0005524">
    <property type="term" value="F:ATP binding"/>
    <property type="evidence" value="ECO:0007669"/>
    <property type="project" value="UniProtKB-KW"/>
</dbReference>
<dbReference type="GO" id="GO:0003924">
    <property type="term" value="F:GTPase activity"/>
    <property type="evidence" value="ECO:0007669"/>
    <property type="project" value="RHEA"/>
</dbReference>
<dbReference type="GO" id="GO:0004482">
    <property type="term" value="F:mRNA 5'-cap (guanine-N7-)-methyltransferase activity"/>
    <property type="evidence" value="ECO:0007669"/>
    <property type="project" value="InterPro"/>
</dbReference>
<dbReference type="GO" id="GO:0003968">
    <property type="term" value="F:RNA-directed RNA polymerase activity"/>
    <property type="evidence" value="ECO:0007669"/>
    <property type="project" value="UniProtKB-KW"/>
</dbReference>
<dbReference type="GO" id="GO:0039689">
    <property type="term" value="P:negative stranded viral RNA replication"/>
    <property type="evidence" value="ECO:0000250"/>
    <property type="project" value="UniProtKB"/>
</dbReference>
<dbReference type="GO" id="GO:0039697">
    <property type="term" value="P:negative stranded viral RNA transcription"/>
    <property type="evidence" value="ECO:0000250"/>
    <property type="project" value="UniProtKB"/>
</dbReference>
<dbReference type="InterPro" id="IPR039530">
    <property type="entry name" value="L_methyltransferase_rhabdo"/>
</dbReference>
<dbReference type="InterPro" id="IPR039736">
    <property type="entry name" value="L_poly_C"/>
</dbReference>
<dbReference type="InterPro" id="IPR026890">
    <property type="entry name" value="Mononeg_mRNAcap"/>
</dbReference>
<dbReference type="InterPro" id="IPR014023">
    <property type="entry name" value="Mononeg_RNA_pol_cat"/>
</dbReference>
<dbReference type="InterPro" id="IPR025786">
    <property type="entry name" value="Mononega_L_MeTrfase"/>
</dbReference>
<dbReference type="InterPro" id="IPR017235">
    <property type="entry name" value="RNA-dir_pol_L_filovirus"/>
</dbReference>
<dbReference type="NCBIfam" id="TIGR04198">
    <property type="entry name" value="paramyx_RNAcap"/>
    <property type="match status" value="1"/>
</dbReference>
<dbReference type="Pfam" id="PF14314">
    <property type="entry name" value="Methyltrans_Mon_2nd"/>
    <property type="match status" value="1"/>
</dbReference>
<dbReference type="Pfam" id="PF14318">
    <property type="entry name" value="Mononeg_mRNAcap"/>
    <property type="match status" value="1"/>
</dbReference>
<dbReference type="Pfam" id="PF00946">
    <property type="entry name" value="Mononeg_RNA_pol"/>
    <property type="match status" value="1"/>
</dbReference>
<dbReference type="PIRSF" id="PIRSF037548">
    <property type="entry name" value="RNA_pol_Filoviridae"/>
    <property type="match status" value="1"/>
</dbReference>
<dbReference type="PROSITE" id="PS50526">
    <property type="entry name" value="RDRP_SSRNA_NEG_NONSEG"/>
    <property type="match status" value="1"/>
</dbReference>
<dbReference type="PROSITE" id="PS51590">
    <property type="entry name" value="SAM_MT_MNV_L"/>
    <property type="match status" value="1"/>
</dbReference>
<comment type="function">
    <text evidence="2">RNA-directed RNA polymerase that catalyzes the transcription of viral mRNAs, their capping and polyadenylation. The template is composed of the viral RNA tightly encapsidated by the nucleoprotein (N). The viral polymerase binds to the genomic RNA at the 3' leader promoter, and transcribes subsequently all viral mRNAs with a decreasing efficiency. The first gene is the most transcribed, and the last the least transcribed. The viral phosphoprotein acts as a processivity factor. Capping is concomitant with initiation of mRNA transcription. Indeed, a GDP polyribonucleotidyl transferase (PRNTase) adds the cap structure when the nascent RNA chain length has reached few nucleotides. Ribose 2'-O methylation of viral mRNA cap precedes and facilitates subsequent guanine-N-7 methylation, both activities being carried by the viral polymerase. Polyadenylation of mRNAs occur by a stuttering mechanism at a slipery stop site present at the end viral genes. After finishing transcription of a mRNA, the polymerase can resume transcription of the downstream gene.</text>
</comment>
<comment type="function">
    <text evidence="2">RNA-directed RNA polymerase that catalyzes the replication of viral genomic RNA. The template is composed of the viral RNA tightly encapsidated by the nucleoprotein (N). The replicase mode is dependent on intracellular N protein concentration. In this mode, the polymerase replicates the whole viral genome without recognizing transcriptional signals, and the replicated genome is not caped or polyadenylated.</text>
</comment>
<comment type="catalytic activity">
    <reaction evidence="4">
        <text>RNA(n) + a ribonucleoside 5'-triphosphate = RNA(n+1) + diphosphate</text>
        <dbReference type="Rhea" id="RHEA:21248"/>
        <dbReference type="Rhea" id="RHEA-COMP:14527"/>
        <dbReference type="Rhea" id="RHEA-COMP:17342"/>
        <dbReference type="ChEBI" id="CHEBI:33019"/>
        <dbReference type="ChEBI" id="CHEBI:61557"/>
        <dbReference type="ChEBI" id="CHEBI:140395"/>
        <dbReference type="EC" id="2.7.7.48"/>
    </reaction>
</comment>
<comment type="catalytic activity">
    <reaction evidence="2">
        <text>a 5'-end (5'-triphosphoguanosine)-adenylyl-adenylyl-cytidylyl-adenosine in mRNA + 2 S-adenosyl-L-methionine = a 5'-end (N(7)-methyl 5'-triphosphoguanosine)-(2'-O-methyladenylyl)-adenylyl-cytidylyl-adenosine in mRNA + 2 S-adenosyl-L-homocysteine + H(+)</text>
        <dbReference type="Rhea" id="RHEA:65376"/>
        <dbReference type="Rhea" id="RHEA-COMP:16797"/>
        <dbReference type="Rhea" id="RHEA-COMP:16798"/>
        <dbReference type="ChEBI" id="CHEBI:15378"/>
        <dbReference type="ChEBI" id="CHEBI:57856"/>
        <dbReference type="ChEBI" id="CHEBI:59789"/>
        <dbReference type="ChEBI" id="CHEBI:156483"/>
        <dbReference type="ChEBI" id="CHEBI:156484"/>
        <dbReference type="EC" id="2.1.1.375"/>
    </reaction>
</comment>
<comment type="catalytic activity">
    <reaction evidence="2">
        <text>a 5'-end (5'-triphosphoguanosine)-adenylyl-adenylyl-cytidylyl-adenosine in mRNA + S-adenosyl-L-methionine = a 5'-end (5'-triphosphoguanosine)-(2'-O-methyladenylyl)-adenylyl-cytidylyl-adenosine in mRNA + S-adenosyl-L-homocysteine + H(+)</text>
        <dbReference type="Rhea" id="RHEA:65380"/>
        <dbReference type="Rhea" id="RHEA-COMP:16797"/>
        <dbReference type="Rhea" id="RHEA-COMP:16801"/>
        <dbReference type="ChEBI" id="CHEBI:15378"/>
        <dbReference type="ChEBI" id="CHEBI:57856"/>
        <dbReference type="ChEBI" id="CHEBI:59789"/>
        <dbReference type="ChEBI" id="CHEBI:156482"/>
        <dbReference type="ChEBI" id="CHEBI:156484"/>
    </reaction>
</comment>
<comment type="catalytic activity">
    <reaction evidence="3">
        <text>a 5'-end triphospho-adenylyl-adenylyl-cytidylyl-adenosine in mRNA + GDP + H(+) = a 5'-end (5'-triphosphoguanosine)-adenylyl-adenylyl-cytidylyl-adenosine in mRNA + diphosphate</text>
        <dbReference type="Rhea" id="RHEA:65436"/>
        <dbReference type="Rhea" id="RHEA-COMP:16797"/>
        <dbReference type="Rhea" id="RHEA-COMP:16799"/>
        <dbReference type="ChEBI" id="CHEBI:15378"/>
        <dbReference type="ChEBI" id="CHEBI:33019"/>
        <dbReference type="ChEBI" id="CHEBI:58189"/>
        <dbReference type="ChEBI" id="CHEBI:156484"/>
        <dbReference type="ChEBI" id="CHEBI:156503"/>
        <dbReference type="EC" id="2.7.7.88"/>
    </reaction>
</comment>
<comment type="catalytic activity">
    <reaction evidence="2">
        <text>a 5'-end (5'-triphosphoguanosine)-(2'-O-methyladenylyl)-adenylyl-cytidylyl-adenosine in mRNA + S-adenosyl-L-methionine = a 5'-end (N(7)-methyl 5'-triphosphoguanosine)-(2'-O-methyladenylyl)-adenylyl-cytidylyl-adenosine in mRNA + S-adenosyl-L-homocysteine</text>
        <dbReference type="Rhea" id="RHEA:65440"/>
        <dbReference type="Rhea" id="RHEA-COMP:16798"/>
        <dbReference type="Rhea" id="RHEA-COMP:16801"/>
        <dbReference type="ChEBI" id="CHEBI:57856"/>
        <dbReference type="ChEBI" id="CHEBI:59789"/>
        <dbReference type="ChEBI" id="CHEBI:156482"/>
        <dbReference type="ChEBI" id="CHEBI:156483"/>
    </reaction>
</comment>
<comment type="catalytic activity">
    <reaction evidence="3">
        <text>GTP + H2O = GDP + phosphate + H(+)</text>
        <dbReference type="Rhea" id="RHEA:19669"/>
        <dbReference type="ChEBI" id="CHEBI:15377"/>
        <dbReference type="ChEBI" id="CHEBI:15378"/>
        <dbReference type="ChEBI" id="CHEBI:37565"/>
        <dbReference type="ChEBI" id="CHEBI:43474"/>
        <dbReference type="ChEBI" id="CHEBI:58189"/>
    </reaction>
</comment>
<comment type="subcellular location">
    <subcellularLocation>
        <location>Host cytoplasm</location>
    </subcellularLocation>
    <subcellularLocation>
        <location evidence="1">Virion</location>
    </subcellularLocation>
</comment>